<reference key="1">
    <citation type="journal article" date="1995" name="Gene">
        <title>Three distinct regions in a rat TFIID subunit containing histone H4 homology.</title>
        <authorList>
            <person name="Kida S."/>
            <person name="Umehara T."/>
            <person name="Horikoshi M."/>
        </authorList>
    </citation>
    <scope>NUCLEOTIDE SEQUENCE [MRNA]</scope>
    <source>
        <tissue>Testis</tissue>
    </source>
</reference>
<reference key="2">
    <citation type="journal article" date="2006" name="Proc. Natl. Acad. Sci. U.S.A.">
        <title>Quantitative phosphoproteomics of vasopressin-sensitive renal cells: regulation of aquaporin-2 phosphorylation at two sites.</title>
        <authorList>
            <person name="Hoffert J.D."/>
            <person name="Pisitkun T."/>
            <person name="Wang G."/>
            <person name="Shen R.-F."/>
            <person name="Knepper M.A."/>
        </authorList>
    </citation>
    <scope>PHOSPHORYLATION [LARGE SCALE ANALYSIS] AT THR-248; TYR-253 AND SER-264</scope>
    <scope>IDENTIFICATION BY MASS SPECTROMETRY [LARGE SCALE ANALYSIS]</scope>
</reference>
<reference key="3">
    <citation type="journal article" date="2012" name="Nat. Commun.">
        <title>Quantitative maps of protein phosphorylation sites across 14 different rat organs and tissues.</title>
        <authorList>
            <person name="Lundby A."/>
            <person name="Secher A."/>
            <person name="Lage K."/>
            <person name="Nordsborg N.B."/>
            <person name="Dmytriyev A."/>
            <person name="Lundby C."/>
            <person name="Olsen J.V."/>
        </authorList>
    </citation>
    <scope>PHOSPHORYLATION [LARGE SCALE ANALYSIS] AT SER-653 AND THR-660</scope>
    <scope>IDENTIFICATION BY MASS SPECTROMETRY [LARGE SCALE ANALYSIS]</scope>
</reference>
<name>TAF6_RAT</name>
<sequence length="678" mass="72713">MAEEKKLKLSNTVLPSESMKVVAESMGIAQIQEETCQLLTDEVSYRIKEIAQDALKFMHMGKRQKLTTSDIDYALKLKNVEPLYGFHAQEFIPFRFASGGGRELYFYEEKEVDLSDIINTPLPRVPLDVCLKAHWLSIEGCQPAIPENPPPAPKEQQKAEATEPLKSAKPGQEEDGPLKGKGQGAAAADGKGKEKKAPPLLEGAPFRLKPRSIHELSVEQQLYYKEITEACVGSCEAKRAEALQSIATDPGLYQMLPRFSTFISEGVRVNVVQNNLALLIYLMRMVKALMDNPTLYLEKYVHELIPAVMTCIVSRQLCLRPDVDNHWALRDFAARLVAQICKHFSTTTNNIQSRITKTFTKSWVDEKTPWTTRYGSIAGLAELGHDVIKTLILPRLQQEGERIRSVLDGPVLSNIDRIGADHVQSLLLKHCAPVLAKLRPPPDNQDAYRGEFGSLGPLLCSHVVKARAQAALQAQQVNRTTLTITQPRPTLTLSQAPQPGPRTPGLLKVPGSIALPVQTLVSARAAAPPQPSPPPTKFIVMSSSSSASSTQQVLSLSTSAPGSGSTTTSPVTTTVPSVQPIVKLVSTATTAPPSTAPAGPGSVQKYIVVSLPPTGEGKGGPPSHPSPVPPSSSSPSPLGGSALCGGKQETGDSPPPAPGTPKANGSQPTGPSSPQPAL</sequence>
<gene>
    <name type="primary">Taf6</name>
    <name type="synonym">Taf2e</name>
</gene>
<comment type="function">
    <text evidence="1">The TFIID basal transcription factor complex plays a major role in the initiation of RNA polymerase II (Pol II)-dependent transcription. TFIID recognizes and binds promoters with or without a TATA box via its subunit TBP, a TATA-box-binding protein, and promotes assembly of the pre-initiation complex (PIC). The TFIID complex consists of TBP and TBP-associated factors (TAFs), including TAF1, TAF2, TAF3, TAF4, TAF5, TAF6, TAF7, TAF8, TAF9, TAF10, TAF11, TAF12 and TAF13. The TFIID complex structure can be divided into 3 modules TFIID-A, TFIID-B, and TFIID-C. TAF6 homodimer connects TFIID modules, forming a rigid core.</text>
</comment>
<comment type="subunit">
    <text evidence="1">Component of the TFIID basal transcription factor complex, composed of TATA-box-binding protein TBP, and a number of TBP-associated factors (TAFs), including TAF1, TAF2, TAF3, TAF4, TAF5, TAF6, TAF7, TAF8, TAF9, TAF10, TAF11, TAF12 and TAF13. Interacts directly with TBP, TAF1/TAFII250, TAF9/TAFII31 and TAF12/TAFII20. The TAF6/TAFII70-TAF9/TAFII31 heterodimer forms an octamer complex with the TAF4B/TFII105-TAF12/TFIID20 heterodimer. Component of some MLL1/MLL complex, at least composed of the core components KMT2A/MLL1, ASH2L, HCFC1/HCF1, WDR5 and RBBP5, as well as the facultative components BACC1, CHD8, E2F6, HSP70, INO80C, KANSL1, LAS1L, MAX, MCRS1, MGA, MYST1/MOF, PELP1, PHF20, PRP31, RING2, RUVB1/TIP49A, RUVB2/TIP49B, SENP3, TAF1, TAF4, TAF6, TAF7, TAF9 and TEX10. Also interacts with the GTFs, TFIIEalpha/GTF2E1 and TFIIFalpha/GTF2F1. Component of the TBP-free TAFII-histone acetylase complex (TFTC-HAT) (By similarity). Interacts with TP53/p53 (By similarity).</text>
</comment>
<comment type="subcellular location">
    <subcellularLocation>
        <location>Nucleus</location>
    </subcellularLocation>
</comment>
<comment type="similarity">
    <text evidence="4">Belongs to the TAF6 family.</text>
</comment>
<evidence type="ECO:0000250" key="1">
    <source>
        <dbReference type="UniProtKB" id="P49848"/>
    </source>
</evidence>
<evidence type="ECO:0000250" key="2">
    <source>
        <dbReference type="UniProtKB" id="Q62311"/>
    </source>
</evidence>
<evidence type="ECO:0000256" key="3">
    <source>
        <dbReference type="SAM" id="MobiDB-lite"/>
    </source>
</evidence>
<evidence type="ECO:0000305" key="4"/>
<evidence type="ECO:0007744" key="5">
    <source>
    </source>
</evidence>
<evidence type="ECO:0007744" key="6">
    <source>
    </source>
</evidence>
<feature type="chain" id="PRO_0000118875" description="Transcription initiation factor TFIID subunit 6">
    <location>
        <begin position="1"/>
        <end position="678"/>
    </location>
</feature>
<feature type="region of interest" description="Disordered" evidence="3">
    <location>
        <begin position="142"/>
        <end position="201"/>
    </location>
</feature>
<feature type="region of interest" description="Disordered" evidence="3">
    <location>
        <begin position="524"/>
        <end position="574"/>
    </location>
</feature>
<feature type="region of interest" description="Disordered" evidence="3">
    <location>
        <begin position="611"/>
        <end position="678"/>
    </location>
</feature>
<feature type="compositionally biased region" description="Low complexity" evidence="3">
    <location>
        <begin position="542"/>
        <end position="574"/>
    </location>
</feature>
<feature type="compositionally biased region" description="Pro residues" evidence="3">
    <location>
        <begin position="622"/>
        <end position="632"/>
    </location>
</feature>
<feature type="compositionally biased region" description="Low complexity" evidence="3">
    <location>
        <begin position="633"/>
        <end position="646"/>
    </location>
</feature>
<feature type="modified residue" description="Phosphothreonine" evidence="1">
    <location>
        <position position="120"/>
    </location>
</feature>
<feature type="modified residue" description="Phosphothreonine" evidence="5">
    <location>
        <position position="248"/>
    </location>
</feature>
<feature type="modified residue" description="Phosphotyrosine" evidence="5">
    <location>
        <position position="253"/>
    </location>
</feature>
<feature type="modified residue" description="Phosphoserine" evidence="5">
    <location>
        <position position="264"/>
    </location>
</feature>
<feature type="modified residue" description="Omega-N-methylarginine" evidence="1">
    <location>
        <position position="524"/>
    </location>
</feature>
<feature type="modified residue" description="Phosphoserine" evidence="2">
    <location>
        <position position="626"/>
    </location>
</feature>
<feature type="modified residue" description="Phosphoserine" evidence="1">
    <location>
        <position position="634"/>
    </location>
</feature>
<feature type="modified residue" description="Phosphoserine" evidence="1">
    <location>
        <position position="636"/>
    </location>
</feature>
<feature type="modified residue" description="Phosphoserine" evidence="6">
    <location>
        <position position="653"/>
    </location>
</feature>
<feature type="modified residue" description="Phosphothreonine" evidence="6">
    <location>
        <position position="660"/>
    </location>
</feature>
<feature type="cross-link" description="Glycyl lysine isopeptide (Lys-Gly) (interchain with G-Cter in SUMO2)" evidence="1">
    <location>
        <position position="196"/>
    </location>
</feature>
<proteinExistence type="evidence at protein level"/>
<organism>
    <name type="scientific">Rattus norvegicus</name>
    <name type="common">Rat</name>
    <dbReference type="NCBI Taxonomy" id="10116"/>
    <lineage>
        <taxon>Eukaryota</taxon>
        <taxon>Metazoa</taxon>
        <taxon>Chordata</taxon>
        <taxon>Craniata</taxon>
        <taxon>Vertebrata</taxon>
        <taxon>Euteleostomi</taxon>
        <taxon>Mammalia</taxon>
        <taxon>Eutheria</taxon>
        <taxon>Euarchontoglires</taxon>
        <taxon>Glires</taxon>
        <taxon>Rodentia</taxon>
        <taxon>Myomorpha</taxon>
        <taxon>Muroidea</taxon>
        <taxon>Muridae</taxon>
        <taxon>Murinae</taxon>
        <taxon>Rattus</taxon>
    </lineage>
</organism>
<keyword id="KW-1017">Isopeptide bond</keyword>
<keyword id="KW-0488">Methylation</keyword>
<keyword id="KW-0539">Nucleus</keyword>
<keyword id="KW-0597">Phosphoprotein</keyword>
<keyword id="KW-1185">Reference proteome</keyword>
<keyword id="KW-0804">Transcription</keyword>
<keyword id="KW-0805">Transcription regulation</keyword>
<keyword id="KW-0832">Ubl conjugation</keyword>
<dbReference type="EMBL" id="D49446">
    <property type="protein sequence ID" value="BAA08435.1"/>
    <property type="molecule type" value="mRNA"/>
</dbReference>
<dbReference type="RefSeq" id="XP_008767283.1">
    <property type="nucleotide sequence ID" value="XM_008769061.2"/>
</dbReference>
<dbReference type="RefSeq" id="XP_008767284.1">
    <property type="nucleotide sequence ID" value="XM_008769062.2"/>
</dbReference>
<dbReference type="RefSeq" id="XP_017453783.1">
    <property type="nucleotide sequence ID" value="XM_017598294.1"/>
</dbReference>
<dbReference type="RefSeq" id="XP_063127214.1">
    <property type="nucleotide sequence ID" value="XM_063271144.1"/>
</dbReference>
<dbReference type="RefSeq" id="XP_063127215.1">
    <property type="nucleotide sequence ID" value="XM_063271145.1"/>
</dbReference>
<dbReference type="RefSeq" id="XP_063127216.1">
    <property type="nucleotide sequence ID" value="XM_063271146.1"/>
</dbReference>
<dbReference type="SMR" id="Q63801"/>
<dbReference type="BioGRID" id="252593">
    <property type="interactions" value="1"/>
</dbReference>
<dbReference type="FunCoup" id="Q63801">
    <property type="interactions" value="2892"/>
</dbReference>
<dbReference type="STRING" id="10116.ENSRNOP00000001829"/>
<dbReference type="iPTMnet" id="Q63801"/>
<dbReference type="PhosphoSitePlus" id="Q63801"/>
<dbReference type="PaxDb" id="10116-ENSRNOP00000001829"/>
<dbReference type="GeneID" id="288533"/>
<dbReference type="UCSC" id="RGD:1311608">
    <property type="organism name" value="rat"/>
</dbReference>
<dbReference type="AGR" id="RGD:1311608"/>
<dbReference type="RGD" id="1311608">
    <property type="gene designation" value="Taf6"/>
</dbReference>
<dbReference type="eggNOG" id="KOG2549">
    <property type="taxonomic scope" value="Eukaryota"/>
</dbReference>
<dbReference type="HOGENOM" id="CLU_021711_2_0_1"/>
<dbReference type="InParanoid" id="Q63801"/>
<dbReference type="OrthoDB" id="361039at2759"/>
<dbReference type="PhylomeDB" id="Q63801"/>
<dbReference type="TreeFam" id="TF313632"/>
<dbReference type="Reactome" id="R-RNO-674695">
    <property type="pathway name" value="RNA Polymerase II Pre-transcription Events"/>
</dbReference>
<dbReference type="Reactome" id="R-RNO-6804756">
    <property type="pathway name" value="Regulation of TP53 Activity through Phosphorylation"/>
</dbReference>
<dbReference type="Reactome" id="R-RNO-6807505">
    <property type="pathway name" value="RNA polymerase II transcribes snRNA genes"/>
</dbReference>
<dbReference type="Reactome" id="R-RNO-73776">
    <property type="pathway name" value="RNA Polymerase II Promoter Escape"/>
</dbReference>
<dbReference type="Reactome" id="R-RNO-73779">
    <property type="pathway name" value="RNA Polymerase II Transcription Pre-Initiation And Promoter Opening"/>
</dbReference>
<dbReference type="Reactome" id="R-RNO-75953">
    <property type="pathway name" value="RNA Polymerase II Transcription Initiation"/>
</dbReference>
<dbReference type="Reactome" id="R-RNO-76042">
    <property type="pathway name" value="RNA Polymerase II Transcription Initiation And Promoter Clearance"/>
</dbReference>
<dbReference type="PRO" id="PR:Q63801"/>
<dbReference type="Proteomes" id="UP000002494">
    <property type="component" value="Unplaced"/>
</dbReference>
<dbReference type="GO" id="GO:0005829">
    <property type="term" value="C:cytosol"/>
    <property type="evidence" value="ECO:0007669"/>
    <property type="project" value="Ensembl"/>
</dbReference>
<dbReference type="GO" id="GO:0071339">
    <property type="term" value="C:MLL1 complex"/>
    <property type="evidence" value="ECO:0000250"/>
    <property type="project" value="UniProtKB"/>
</dbReference>
<dbReference type="GO" id="GO:0005634">
    <property type="term" value="C:nucleus"/>
    <property type="evidence" value="ECO:0000266"/>
    <property type="project" value="RGD"/>
</dbReference>
<dbReference type="GO" id="GO:0032991">
    <property type="term" value="C:protein-containing complex"/>
    <property type="evidence" value="ECO:0000266"/>
    <property type="project" value="RGD"/>
</dbReference>
<dbReference type="GO" id="GO:0000124">
    <property type="term" value="C:SAGA complex"/>
    <property type="evidence" value="ECO:0007669"/>
    <property type="project" value="InterPro"/>
</dbReference>
<dbReference type="GO" id="GO:0046695">
    <property type="term" value="C:SLIK (SAGA-like) complex"/>
    <property type="evidence" value="ECO:0007669"/>
    <property type="project" value="InterPro"/>
</dbReference>
<dbReference type="GO" id="GO:0005669">
    <property type="term" value="C:transcription factor TFIID complex"/>
    <property type="evidence" value="ECO:0000266"/>
    <property type="project" value="RGD"/>
</dbReference>
<dbReference type="GO" id="GO:0033276">
    <property type="term" value="C:transcription factor TFTC complex"/>
    <property type="evidence" value="ECO:0000266"/>
    <property type="project" value="RGD"/>
</dbReference>
<dbReference type="GO" id="GO:0017162">
    <property type="term" value="F:aryl hydrocarbon receptor binding"/>
    <property type="evidence" value="ECO:0000266"/>
    <property type="project" value="RGD"/>
</dbReference>
<dbReference type="GO" id="GO:0003677">
    <property type="term" value="F:DNA binding"/>
    <property type="evidence" value="ECO:0000266"/>
    <property type="project" value="RGD"/>
</dbReference>
<dbReference type="GO" id="GO:0046982">
    <property type="term" value="F:protein heterodimerization activity"/>
    <property type="evidence" value="ECO:0007669"/>
    <property type="project" value="InterPro"/>
</dbReference>
<dbReference type="GO" id="GO:0016251">
    <property type="term" value="F:RNA polymerase II general transcription initiation factor activity"/>
    <property type="evidence" value="ECO:0000266"/>
    <property type="project" value="RGD"/>
</dbReference>
<dbReference type="GO" id="GO:0003713">
    <property type="term" value="F:transcription coactivator activity"/>
    <property type="evidence" value="ECO:0000318"/>
    <property type="project" value="GO_Central"/>
</dbReference>
<dbReference type="GO" id="GO:0006352">
    <property type="term" value="P:DNA-templated transcription initiation"/>
    <property type="evidence" value="ECO:0000266"/>
    <property type="project" value="RGD"/>
</dbReference>
<dbReference type="GO" id="GO:0042789">
    <property type="term" value="P:mRNA transcription by RNA polymerase II"/>
    <property type="evidence" value="ECO:0000266"/>
    <property type="project" value="RGD"/>
</dbReference>
<dbReference type="GO" id="GO:0045786">
    <property type="term" value="P:negative regulation of cell cycle"/>
    <property type="evidence" value="ECO:0000266"/>
    <property type="project" value="RGD"/>
</dbReference>
<dbReference type="GO" id="GO:0060261">
    <property type="term" value="P:positive regulation of transcription initiation by RNA polymerase II"/>
    <property type="evidence" value="ECO:0000266"/>
    <property type="project" value="RGD"/>
</dbReference>
<dbReference type="GO" id="GO:0006357">
    <property type="term" value="P:regulation of transcription by RNA polymerase II"/>
    <property type="evidence" value="ECO:0000266"/>
    <property type="project" value="RGD"/>
</dbReference>
<dbReference type="GO" id="GO:0051123">
    <property type="term" value="P:RNA polymerase II preinitiation complex assembly"/>
    <property type="evidence" value="ECO:0000266"/>
    <property type="project" value="RGD"/>
</dbReference>
<dbReference type="GO" id="GO:0006367">
    <property type="term" value="P:transcription initiation at RNA polymerase II promoter"/>
    <property type="evidence" value="ECO:0000266"/>
    <property type="project" value="RGD"/>
</dbReference>
<dbReference type="CDD" id="cd22931">
    <property type="entry name" value="HFD_TAF6"/>
    <property type="match status" value="1"/>
</dbReference>
<dbReference type="CDD" id="cd08050">
    <property type="entry name" value="TAF6C"/>
    <property type="match status" value="1"/>
</dbReference>
<dbReference type="FunFam" id="1.10.20.10:FF:000030">
    <property type="entry name" value="Transcription initiation factor TFIID subunit 6"/>
    <property type="match status" value="1"/>
</dbReference>
<dbReference type="FunFam" id="1.25.40.770:FF:000001">
    <property type="entry name" value="Transcription initiation factor TFIID subunit 6"/>
    <property type="match status" value="1"/>
</dbReference>
<dbReference type="Gene3D" id="1.10.20.10">
    <property type="entry name" value="Histone, subunit A"/>
    <property type="match status" value="1"/>
</dbReference>
<dbReference type="Gene3D" id="1.25.40.770">
    <property type="entry name" value="TAF6, C-terminal HEAT repeat domain"/>
    <property type="match status" value="1"/>
</dbReference>
<dbReference type="InterPro" id="IPR016024">
    <property type="entry name" value="ARM-type_fold"/>
</dbReference>
<dbReference type="InterPro" id="IPR009072">
    <property type="entry name" value="Histone-fold"/>
</dbReference>
<dbReference type="InterPro" id="IPR037796">
    <property type="entry name" value="TAF6"/>
</dbReference>
<dbReference type="InterPro" id="IPR011442">
    <property type="entry name" value="TAF6_C"/>
</dbReference>
<dbReference type="InterPro" id="IPR046344">
    <property type="entry name" value="TAF6_C_sf"/>
</dbReference>
<dbReference type="InterPro" id="IPR004823">
    <property type="entry name" value="TAF_TATA-bd_Histone-like_dom"/>
</dbReference>
<dbReference type="PANTHER" id="PTHR10221">
    <property type="entry name" value="TRANSCRIPTION INITIATION FACTOR TFIID SUBUNIT 6"/>
    <property type="match status" value="1"/>
</dbReference>
<dbReference type="PANTHER" id="PTHR10221:SF9">
    <property type="entry name" value="TRANSCRIPTION INITIATION FACTOR TFIID SUBUNIT 6"/>
    <property type="match status" value="1"/>
</dbReference>
<dbReference type="Pfam" id="PF02969">
    <property type="entry name" value="TAF"/>
    <property type="match status" value="1"/>
</dbReference>
<dbReference type="Pfam" id="PF07571">
    <property type="entry name" value="TAF6_C"/>
    <property type="match status" value="1"/>
</dbReference>
<dbReference type="SMART" id="SM00803">
    <property type="entry name" value="TAF"/>
    <property type="match status" value="1"/>
</dbReference>
<dbReference type="SUPFAM" id="SSF48371">
    <property type="entry name" value="ARM repeat"/>
    <property type="match status" value="1"/>
</dbReference>
<dbReference type="SUPFAM" id="SSF47113">
    <property type="entry name" value="Histone-fold"/>
    <property type="match status" value="1"/>
</dbReference>
<accession>Q63801</accession>
<protein>
    <recommendedName>
        <fullName>Transcription initiation factor TFIID subunit 6</fullName>
    </recommendedName>
    <alternativeName>
        <fullName>Transcription initiation factor TFIID 70 kDa subunit</fullName>
        <shortName>TAF(II)70</shortName>
        <shortName>TAFII70</shortName>
    </alternativeName>
    <alternativeName>
        <fullName>Transcription initiation factor TFIID 80 kDa subunit</fullName>
        <shortName>TAF(II)80</shortName>
        <shortName>TAFII-80</shortName>
        <shortName>TAFII80</shortName>
    </alternativeName>
    <alternativeName>
        <fullName>p80</fullName>
    </alternativeName>
</protein>